<name>PIKC_STRVZ</name>
<keyword id="KW-0002">3D-structure</keyword>
<keyword id="KW-0045">Antibiotic biosynthesis</keyword>
<keyword id="KW-0349">Heme</keyword>
<keyword id="KW-0408">Iron</keyword>
<keyword id="KW-0479">Metal-binding</keyword>
<keyword id="KW-0503">Monooxygenase</keyword>
<keyword id="KW-0560">Oxidoreductase</keyword>
<feature type="chain" id="PRO_0000430718" description="Cytochrome P450 monooxygenase PikC">
    <location>
        <begin position="1"/>
        <end position="416"/>
    </location>
</feature>
<feature type="binding site" evidence="2 3">
    <location>
        <position position="94"/>
    </location>
    <ligand>
        <name>substrate</name>
    </ligand>
</feature>
<feature type="binding site" evidence="2 3">
    <location>
        <begin position="187"/>
        <end position="191"/>
    </location>
    <ligand>
        <name>substrate</name>
    </ligand>
</feature>
<feature type="binding site" evidence="2 3">
    <location>
        <begin position="238"/>
        <end position="246"/>
    </location>
    <ligand>
        <name>substrate</name>
    </ligand>
</feature>
<feature type="binding site" description="axial binding residue" evidence="2 3 4 5 15 16 17 18 19 20 21 22 23 24 25 26">
    <location>
        <position position="354"/>
    </location>
    <ligand>
        <name>heme</name>
        <dbReference type="ChEBI" id="CHEBI:30413"/>
    </ligand>
    <ligandPart>
        <name>Fe</name>
        <dbReference type="ChEBI" id="CHEBI:18248"/>
    </ligandPart>
</feature>
<feature type="mutagenesis site" description="Mildly reduces activity with YC-17 and narbomycin." evidence="2">
    <original>D</original>
    <variation>A</variation>
    <location>
        <position position="50"/>
    </location>
</feature>
<feature type="mutagenesis site" description="Increases affinity for narbomycin and YC-17. Mildly increases activity YC-17 and narbomycin." evidence="2 3">
    <original>D</original>
    <variation>N</variation>
    <location>
        <position position="50"/>
    </location>
</feature>
<feature type="mutagenesis site" description="Strongly reduces activity with narbomycin, but has only minor effect on activity with YC-17. Loss of activity with YC-17 and narbomycin; when associated with A-94." evidence="2">
    <original>E</original>
    <variation>A</variation>
    <location>
        <position position="85"/>
    </location>
</feature>
<feature type="mutagenesis site" description="Reduces affinity for narbomycin and YC-17. Strongly reduces activity with narbomycin and YC-17." evidence="2 3">
    <original>E</original>
    <variation>Q</variation>
    <location>
        <position position="85"/>
    </location>
</feature>
<feature type="mutagenesis site" description="Strongly reduces activity with YC-17, but has only minor effect on activity with narbomycin. Loss of activity with YC-17 and narbomycin; when associated with A-85." evidence="2">
    <original>E</original>
    <variation>A</variation>
    <location>
        <position position="94"/>
    </location>
</feature>
<feature type="mutagenesis site" description="Strongly reduces affinity for narbomycin and YC-17. Strongly reduces activity with narbomycin and YC-17." evidence="2 3">
    <original>E</original>
    <variation>Q</variation>
    <location>
        <position position="94"/>
    </location>
</feature>
<feature type="strand" evidence="30">
    <location>
        <begin position="14"/>
        <end position="16"/>
    </location>
</feature>
<feature type="helix" evidence="30">
    <location>
        <begin position="18"/>
        <end position="20"/>
    </location>
</feature>
<feature type="helix" evidence="30">
    <location>
        <begin position="21"/>
        <end position="26"/>
    </location>
</feature>
<feature type="helix" evidence="30">
    <location>
        <begin position="29"/>
        <end position="38"/>
    </location>
</feature>
<feature type="strand" evidence="30">
    <location>
        <begin position="40"/>
        <end position="45"/>
    </location>
</feature>
<feature type="strand" evidence="28">
    <location>
        <begin position="47"/>
        <end position="49"/>
    </location>
</feature>
<feature type="strand" evidence="30">
    <location>
        <begin position="51"/>
        <end position="55"/>
    </location>
</feature>
<feature type="helix" evidence="30">
    <location>
        <begin position="58"/>
        <end position="65"/>
    </location>
</feature>
<feature type="helix" evidence="30">
    <location>
        <begin position="74"/>
        <end position="76"/>
    </location>
</feature>
<feature type="helix" evidence="30">
    <location>
        <begin position="83"/>
        <end position="88"/>
    </location>
</feature>
<feature type="helix" evidence="30">
    <location>
        <begin position="92"/>
        <end position="94"/>
    </location>
</feature>
<feature type="helix" evidence="30">
    <location>
        <begin position="99"/>
        <end position="107"/>
    </location>
</feature>
<feature type="helix" evidence="30">
    <location>
        <begin position="108"/>
        <end position="111"/>
    </location>
</feature>
<feature type="helix" evidence="30">
    <location>
        <begin position="113"/>
        <end position="117"/>
    </location>
</feature>
<feature type="helix" evidence="30">
    <location>
        <begin position="120"/>
        <end position="135"/>
    </location>
</feature>
<feature type="strand" evidence="29">
    <location>
        <begin position="137"/>
        <end position="139"/>
    </location>
</feature>
<feature type="strand" evidence="30">
    <location>
        <begin position="140"/>
        <end position="143"/>
    </location>
</feature>
<feature type="helix" evidence="30">
    <location>
        <begin position="144"/>
        <end position="147"/>
    </location>
</feature>
<feature type="turn" evidence="30">
    <location>
        <begin position="148"/>
        <end position="150"/>
    </location>
</feature>
<feature type="helix" evidence="30">
    <location>
        <begin position="151"/>
        <end position="161"/>
    </location>
</feature>
<feature type="helix" evidence="30">
    <location>
        <begin position="165"/>
        <end position="167"/>
    </location>
</feature>
<feature type="helix" evidence="30">
    <location>
        <begin position="170"/>
        <end position="179"/>
    </location>
</feature>
<feature type="helix" evidence="30">
    <location>
        <begin position="184"/>
        <end position="205"/>
    </location>
</feature>
<feature type="helix" evidence="30">
    <location>
        <begin position="213"/>
        <end position="223"/>
    </location>
</feature>
<feature type="turn" evidence="30">
    <location>
        <begin position="225"/>
        <end position="227"/>
    </location>
</feature>
<feature type="helix" evidence="30">
    <location>
        <begin position="230"/>
        <end position="243"/>
    </location>
</feature>
<feature type="helix" evidence="30">
    <location>
        <begin position="246"/>
        <end position="261"/>
    </location>
</feature>
<feature type="helix" evidence="30">
    <location>
        <begin position="263"/>
        <end position="271"/>
    </location>
</feature>
<feature type="helix" evidence="30">
    <location>
        <begin position="273"/>
        <end position="275"/>
    </location>
</feature>
<feature type="helix" evidence="30">
    <location>
        <begin position="276"/>
        <end position="287"/>
    </location>
</feature>
<feature type="strand" evidence="30">
    <location>
        <begin position="289"/>
        <end position="292"/>
    </location>
</feature>
<feature type="strand" evidence="30">
    <location>
        <begin position="296"/>
        <end position="300"/>
    </location>
</feature>
<feature type="strand" evidence="30">
    <location>
        <begin position="302"/>
        <end position="304"/>
    </location>
</feature>
<feature type="strand" evidence="30">
    <location>
        <begin position="307"/>
        <end position="309"/>
    </location>
</feature>
<feature type="strand" evidence="30">
    <location>
        <begin position="315"/>
        <end position="317"/>
    </location>
</feature>
<feature type="helix" evidence="30">
    <location>
        <begin position="319"/>
        <end position="322"/>
    </location>
</feature>
<feature type="turn" evidence="30">
    <location>
        <begin position="326"/>
        <end position="328"/>
    </location>
</feature>
<feature type="strand" evidence="30">
    <location>
        <begin position="329"/>
        <end position="331"/>
    </location>
</feature>
<feature type="strand" evidence="28">
    <location>
        <begin position="350"/>
        <end position="353"/>
    </location>
</feature>
<feature type="helix" evidence="30">
    <location>
        <begin position="357"/>
        <end position="374"/>
    </location>
</feature>
<feature type="strand" evidence="27">
    <location>
        <begin position="379"/>
        <end position="382"/>
    </location>
</feature>
<feature type="helix" evidence="30">
    <location>
        <begin position="384"/>
        <end position="386"/>
    </location>
</feature>
<feature type="strand" evidence="27">
    <location>
        <begin position="393"/>
        <end position="395"/>
    </location>
</feature>
<feature type="strand" evidence="30">
    <location>
        <begin position="402"/>
        <end position="404"/>
    </location>
</feature>
<reference evidence="13" key="1">
    <citation type="journal article" date="1998" name="Biochemistry">
        <title>Characterization of the macrolide P-450 hydroxylase from Streptomyces venezuelae which converts narbomycin to picromycin.</title>
        <authorList>
            <person name="Betlach M.C."/>
            <person name="Kealey J.T."/>
            <person name="Ashley G.W."/>
            <person name="McDaniel R."/>
        </authorList>
    </citation>
    <scope>NUCLEOTIDE SEQUENCE [GENOMIC DNA]</scope>
    <scope>FUNCTION</scope>
    <scope>CATALYTIC ACTIVITY</scope>
    <scope>COFACTOR</scope>
    <scope>BIOPHYSICOCHEMICAL PROPERTIES</scope>
    <scope>PATHWAY</scope>
    <source>
        <strain evidence="10">ATCC 15439 / DSM 41110 / IMRU3627 / M-2140</strain>
    </source>
</reference>
<reference evidence="14" key="2">
    <citation type="journal article" date="1998" name="Chem. Biol.">
        <title>Hydroxylation of macrolactones YC-17 and narbomycin is mediated by the pikC-encoded cytochrome P450 in Streptomyces venezuelae.</title>
        <authorList>
            <person name="Xue Y."/>
            <person name="Wilson D."/>
            <person name="Zhao L."/>
            <person name="Liu H."/>
            <person name="Sherman D.H."/>
        </authorList>
    </citation>
    <scope>NUCLEOTIDE SEQUENCE [GENOMIC DNA]</scope>
    <scope>FUNCTION</scope>
    <scope>CATALYTIC ACTIVITY</scope>
    <scope>COFACTOR</scope>
    <scope>PATHWAY</scope>
    <scope>DISRUPTION PHENOTYPE</scope>
    <scope>BIOPHYSICOCHEMICAL PROPERTIES</scope>
    <source>
        <strain evidence="11">ATCC 15439 / DSM 41110 / IMRU3627 / M-2140</strain>
    </source>
</reference>
<reference evidence="14" key="3">
    <citation type="journal article" date="1998" name="Proc. Natl. Acad. Sci. U.S.A.">
        <title>A gene cluster for macrolide antibiotic biosynthesis in Streptomyces venezuelae: architecture of metabolic diversity.</title>
        <authorList>
            <person name="Xue Y."/>
            <person name="Zhao L."/>
            <person name="Liu H.W."/>
            <person name="Sherman D.H."/>
        </authorList>
    </citation>
    <scope>NUCLEOTIDE SEQUENCE [GENOMIC DNA]</scope>
    <scope>IDENTIFICATION</scope>
    <scope>PATHWAY</scope>
    <scope>DISRUPTION PHENOTYPE</scope>
    <source>
        <strain evidence="9">ATCC 15439 / DSM 41110 / IMRU3627 / M-2140</strain>
    </source>
</reference>
<reference key="4">
    <citation type="journal article" date="2006" name="J. Biol. Chem.">
        <title>The structural basis for substrate anchoring, active site selectivity, and product formation by P450 PikC from Streptomyces venezuelae.</title>
        <authorList>
            <person name="Sherman D.H."/>
            <person name="Li S."/>
            <person name="Yermalitskaya L.V."/>
            <person name="Kim Y."/>
            <person name="Smith J.A."/>
            <person name="Waterman M.R."/>
            <person name="Podust L.M."/>
        </authorList>
    </citation>
    <scope>X-RAY CRYSTALLOGRAPHY (1.70 ANGSTROMS) IN COMPLEX WITH HEME; YC-17 AND NARBOMYCIN</scope>
    <scope>FUNCTION</scope>
    <scope>CATALYTIC ACTIVITY</scope>
    <scope>COFACTOR</scope>
    <scope>PATHWAY</scope>
    <scope>MUTAGENESIS OF ASP-50; GLU-85 AND GLU-94</scope>
</reference>
<reference evidence="19 20" key="5">
    <citation type="journal article" date="2009" name="J. Biol. Chem.">
        <title>Analysis of transient and catalytic desosamine-binding pockets in cytochrome P-450 PikC from Streptomyces venezuelae.</title>
        <authorList>
            <person name="Li S."/>
            <person name="Ouellet H."/>
            <person name="Sherman D.H."/>
            <person name="Podust L.M."/>
        </authorList>
    </citation>
    <scope>X-RAY CRYSTALLOGRAPHY (1.85 ANGSTROMS) OF MUTANT ASN-50 IN COMPLEXES WITH HEME; NARBOMYCIN AND YC-17</scope>
    <scope>FUNCTION</scope>
    <scope>CATALYTIC ACTIVITY</scope>
    <scope>COFACTOR</scope>
    <scope>PATHWAY</scope>
    <scope>MUTAGENESIS OF ASP-50; GLU-85 AND GLU-94</scope>
</reference>
<reference evidence="21 22" key="6">
    <citation type="journal article" date="2009" name="Proc. Natl. Acad. Sci. U.S.A.">
        <title>Selective oxidation of carbolide C-H bonds by an engineered macrolide P450 mono-oxygenase.</title>
        <authorList>
            <person name="Li S."/>
            <person name="Chaulagain M.R."/>
            <person name="Knauff A.R."/>
            <person name="Podust L.M."/>
            <person name="Montgomery J."/>
            <person name="Sherman D.H."/>
        </authorList>
    </citation>
    <scope>X-RAY CRYSTALLOGRAPHY (2.00 ANGSTROMS) IN COMPLEX WITH HEME</scope>
    <scope>FUNCTION</scope>
    <scope>CATALYTIC ACTIVITY</scope>
    <scope>COFACTOR</scope>
    <scope>PATHWAY</scope>
</reference>
<reference evidence="23 25" key="7">
    <citation type="journal article" date="2014" name="J. Am. Chem. Soc.">
        <title>Directing group-controlled regioselectivity in an enzymatic C-H bond oxygenation.</title>
        <authorList>
            <person name="Negretti S."/>
            <person name="Narayan A.R."/>
            <person name="Chiou K.C."/>
            <person name="Kells P.M."/>
            <person name="Stachowski J.L."/>
            <person name="Hansen D.A."/>
            <person name="Podust L.M."/>
            <person name="Montgomery J."/>
            <person name="Sherman D.H."/>
        </authorList>
    </citation>
    <scope>X-RAY CRYSTALLOGRAPHY (1.84 ANGSTROMS) OF MUTANT ASN-50 IN COMPLEX WITH HEME</scope>
    <scope>FUNCTION</scope>
    <scope>CATALYTIC ACTIVITY</scope>
    <scope>COFACTOR</scope>
    <scope>PATHWAY</scope>
</reference>
<accession>O87605</accession>
<dbReference type="EC" id="1.14.15.33" evidence="2 3 4 5 7 8"/>
<dbReference type="EMBL" id="AF087022">
    <property type="protein sequence ID" value="AAC64105.1"/>
    <property type="molecule type" value="Genomic_DNA"/>
</dbReference>
<dbReference type="EMBL" id="AF079139">
    <property type="protein sequence ID" value="AAC68886.1"/>
    <property type="molecule type" value="Genomic_DNA"/>
</dbReference>
<dbReference type="RefSeq" id="WP_055641638.1">
    <property type="nucleotide sequence ID" value="NZ_CP059991.1"/>
</dbReference>
<dbReference type="PDB" id="2BVJ">
    <property type="method" value="X-ray"/>
    <property type="resolution" value="2.10 A"/>
    <property type="chains" value="A/B=1-416"/>
</dbReference>
<dbReference type="PDB" id="2C6H">
    <property type="method" value="X-ray"/>
    <property type="resolution" value="2.35 A"/>
    <property type="chains" value="A/B=1-416"/>
</dbReference>
<dbReference type="PDB" id="2C7X">
    <property type="method" value="X-ray"/>
    <property type="resolution" value="1.75 A"/>
    <property type="chains" value="A=1-416"/>
</dbReference>
<dbReference type="PDB" id="2CA0">
    <property type="method" value="X-ray"/>
    <property type="resolution" value="2.85 A"/>
    <property type="chains" value="A/B=1-416"/>
</dbReference>
<dbReference type="PDB" id="2CD8">
    <property type="method" value="X-ray"/>
    <property type="resolution" value="1.70 A"/>
    <property type="chains" value="A/B=1-416"/>
</dbReference>
<dbReference type="PDB" id="2VZ7">
    <property type="method" value="X-ray"/>
    <property type="resolution" value="3.20 A"/>
    <property type="chains" value="A/B=1-416"/>
</dbReference>
<dbReference type="PDB" id="2VZM">
    <property type="method" value="X-ray"/>
    <property type="resolution" value="1.85 A"/>
    <property type="chains" value="A/B=1-416"/>
</dbReference>
<dbReference type="PDB" id="2WHW">
    <property type="method" value="X-ray"/>
    <property type="resolution" value="2.20 A"/>
    <property type="chains" value="A/B=1-416"/>
</dbReference>
<dbReference type="PDB" id="2WI9">
    <property type="method" value="X-ray"/>
    <property type="resolution" value="2.00 A"/>
    <property type="chains" value="A/B=1-416"/>
</dbReference>
<dbReference type="PDB" id="3ZK5">
    <property type="method" value="X-ray"/>
    <property type="resolution" value="1.89 A"/>
    <property type="chains" value="A/B=1-416"/>
</dbReference>
<dbReference type="PDB" id="3ZPI">
    <property type="method" value="X-ray"/>
    <property type="resolution" value="1.63 A"/>
    <property type="chains" value="A/B=1-416"/>
</dbReference>
<dbReference type="PDB" id="4B7D">
    <property type="method" value="X-ray"/>
    <property type="resolution" value="1.89 A"/>
    <property type="chains" value="A/B=1-416"/>
</dbReference>
<dbReference type="PDB" id="4B7S">
    <property type="method" value="X-ray"/>
    <property type="resolution" value="1.84 A"/>
    <property type="chains" value="A/B=1-416"/>
</dbReference>
<dbReference type="PDB" id="4BF4">
    <property type="method" value="X-ray"/>
    <property type="resolution" value="2.70 A"/>
    <property type="chains" value="A/B/C/D/E/F/G/H/I/J/K/L/M/N/O/P=1-416"/>
</dbReference>
<dbReference type="PDB" id="4UMZ">
    <property type="method" value="X-ray"/>
    <property type="resolution" value="2.32 A"/>
    <property type="chains" value="A/B=1-416"/>
</dbReference>
<dbReference type="PDB" id="7XBM">
    <property type="method" value="X-ray"/>
    <property type="resolution" value="2.40 A"/>
    <property type="chains" value="A/B=1-416"/>
</dbReference>
<dbReference type="PDB" id="7XBN">
    <property type="method" value="X-ray"/>
    <property type="resolution" value="2.00 A"/>
    <property type="chains" value="A/B=1-416"/>
</dbReference>
<dbReference type="PDB" id="7XBO">
    <property type="method" value="X-ray"/>
    <property type="resolution" value="2.20 A"/>
    <property type="chains" value="A/B=1-416"/>
</dbReference>
<dbReference type="PDB" id="8GUE">
    <property type="method" value="X-ray"/>
    <property type="resolution" value="1.90 A"/>
    <property type="chains" value="A/B=1-416"/>
</dbReference>
<dbReference type="PDBsum" id="2BVJ"/>
<dbReference type="PDBsum" id="2C6H"/>
<dbReference type="PDBsum" id="2C7X"/>
<dbReference type="PDBsum" id="2CA0"/>
<dbReference type="PDBsum" id="2CD8"/>
<dbReference type="PDBsum" id="2VZ7"/>
<dbReference type="PDBsum" id="2VZM"/>
<dbReference type="PDBsum" id="2WHW"/>
<dbReference type="PDBsum" id="2WI9"/>
<dbReference type="PDBsum" id="3ZK5"/>
<dbReference type="PDBsum" id="3ZPI"/>
<dbReference type="PDBsum" id="4B7D"/>
<dbReference type="PDBsum" id="4B7S"/>
<dbReference type="PDBsum" id="4BF4"/>
<dbReference type="PDBsum" id="4UMZ"/>
<dbReference type="PDBsum" id="7XBM"/>
<dbReference type="PDBsum" id="7XBN"/>
<dbReference type="PDBsum" id="7XBO"/>
<dbReference type="PDBsum" id="8GUE"/>
<dbReference type="SMR" id="O87605"/>
<dbReference type="KEGG" id="ag:AAC68886"/>
<dbReference type="BioCyc" id="MetaCyc:MONOMER-18405"/>
<dbReference type="BRENDA" id="1.14.15.33">
    <property type="organism ID" value="6106"/>
</dbReference>
<dbReference type="EvolutionaryTrace" id="O87605"/>
<dbReference type="GO" id="GO:0020037">
    <property type="term" value="F:heme binding"/>
    <property type="evidence" value="ECO:0000314"/>
    <property type="project" value="UniProtKB"/>
</dbReference>
<dbReference type="GO" id="GO:0005506">
    <property type="term" value="F:iron ion binding"/>
    <property type="evidence" value="ECO:0000314"/>
    <property type="project" value="UniProtKB"/>
</dbReference>
<dbReference type="GO" id="GO:0004497">
    <property type="term" value="F:monooxygenase activity"/>
    <property type="evidence" value="ECO:0000314"/>
    <property type="project" value="UniProtKB"/>
</dbReference>
<dbReference type="GO" id="GO:0016705">
    <property type="term" value="F:oxidoreductase activity, acting on paired donors, with incorporation or reduction of molecular oxygen"/>
    <property type="evidence" value="ECO:0007669"/>
    <property type="project" value="InterPro"/>
</dbReference>
<dbReference type="GO" id="GO:0033068">
    <property type="term" value="P:macrolide biosynthetic process"/>
    <property type="evidence" value="ECO:0000314"/>
    <property type="project" value="UniProtKB"/>
</dbReference>
<dbReference type="CDD" id="cd11029">
    <property type="entry name" value="CYP107-like"/>
    <property type="match status" value="1"/>
</dbReference>
<dbReference type="FunFam" id="1.10.630.10:FF:000271">
    <property type="entry name" value="Cytochrome P450 monooxygenase PikC"/>
    <property type="match status" value="1"/>
</dbReference>
<dbReference type="Gene3D" id="1.10.630.10">
    <property type="entry name" value="Cytochrome P450"/>
    <property type="match status" value="1"/>
</dbReference>
<dbReference type="InterPro" id="IPR001128">
    <property type="entry name" value="Cyt_P450"/>
</dbReference>
<dbReference type="InterPro" id="IPR002397">
    <property type="entry name" value="Cyt_P450_B"/>
</dbReference>
<dbReference type="InterPro" id="IPR017972">
    <property type="entry name" value="Cyt_P450_CS"/>
</dbReference>
<dbReference type="InterPro" id="IPR036396">
    <property type="entry name" value="Cyt_P450_sf"/>
</dbReference>
<dbReference type="PANTHER" id="PTHR46696:SF1">
    <property type="entry name" value="CYTOCHROME P450 YJIB-RELATED"/>
    <property type="match status" value="1"/>
</dbReference>
<dbReference type="PANTHER" id="PTHR46696">
    <property type="entry name" value="P450, PUTATIVE (EUROFUNG)-RELATED"/>
    <property type="match status" value="1"/>
</dbReference>
<dbReference type="Pfam" id="PF00067">
    <property type="entry name" value="p450"/>
    <property type="match status" value="1"/>
</dbReference>
<dbReference type="PRINTS" id="PR00359">
    <property type="entry name" value="BP450"/>
</dbReference>
<dbReference type="PRINTS" id="PR00385">
    <property type="entry name" value="P450"/>
</dbReference>
<dbReference type="SUPFAM" id="SSF48264">
    <property type="entry name" value="Cytochrome P450"/>
    <property type="match status" value="1"/>
</dbReference>
<dbReference type="PROSITE" id="PS00086">
    <property type="entry name" value="CYTOCHROME_P450"/>
    <property type="match status" value="1"/>
</dbReference>
<proteinExistence type="evidence at protein level"/>
<protein>
    <recommendedName>
        <fullName evidence="11">Cytochrome P450 monooxygenase PikC</fullName>
        <ecNumber evidence="2 3 4 5 7 8">1.14.15.33</ecNumber>
    </recommendedName>
    <alternativeName>
        <fullName evidence="10">Cytochrome P450 monooxygenase PicK</fullName>
    </alternativeName>
    <alternativeName>
        <fullName evidence="10">Narbomycin C-12 hydroxylase</fullName>
    </alternativeName>
    <alternativeName>
        <fullName>Pikromycin synthase CYP107L1</fullName>
    </alternativeName>
</protein>
<gene>
    <name evidence="9 11" type="primary">pikC</name>
    <name evidence="10" type="synonym">picK</name>
</gene>
<comment type="function">
    <text evidence="2 3 4 5 7 8">Catalyzes the hydroxylation of narbomycin to give rise to pikromycin, and of 10-deoxymethymycin (YC-17) to give rise to methymycin and neomethymycin during macrolide antibiotic biosynthesis. In addition, produces low amounts of neopicromycin, novapikromycin and novamethymycin. Requires the participation of a ferredoxin and a ferredoxin reductase for the transfer of electrons from NADPH to the monooxygenase.</text>
</comment>
<comment type="catalytic activity">
    <reaction evidence="2 3 4 5 7 8">
        <text>narbomycin + 2 reduced [2Fe-2S]-[ferredoxin] + O2 + 2 H(+) = pikromycin + 2 oxidized [2Fe-2S]-[ferredoxin] + H2O</text>
        <dbReference type="Rhea" id="RHEA:39887"/>
        <dbReference type="Rhea" id="RHEA-COMP:10000"/>
        <dbReference type="Rhea" id="RHEA-COMP:10001"/>
        <dbReference type="ChEBI" id="CHEBI:15377"/>
        <dbReference type="ChEBI" id="CHEBI:15378"/>
        <dbReference type="ChEBI" id="CHEBI:15379"/>
        <dbReference type="ChEBI" id="CHEBI:33737"/>
        <dbReference type="ChEBI" id="CHEBI:33738"/>
        <dbReference type="ChEBI" id="CHEBI:76800"/>
        <dbReference type="ChEBI" id="CHEBI:76801"/>
        <dbReference type="EC" id="1.14.15.33"/>
    </reaction>
</comment>
<comment type="catalytic activity">
    <reaction evidence="2 3 4 5 7 8">
        <text>narbomycin + 2 reduced [2Fe-2S]-[ferredoxin] + O2 + 2 H(+) = neopikromycin + 2 oxidized [2Fe-2S]-[ferredoxin] + H2O</text>
        <dbReference type="Rhea" id="RHEA:40531"/>
        <dbReference type="Rhea" id="RHEA-COMP:10000"/>
        <dbReference type="Rhea" id="RHEA-COMP:10001"/>
        <dbReference type="ChEBI" id="CHEBI:15377"/>
        <dbReference type="ChEBI" id="CHEBI:15378"/>
        <dbReference type="ChEBI" id="CHEBI:15379"/>
        <dbReference type="ChEBI" id="CHEBI:33737"/>
        <dbReference type="ChEBI" id="CHEBI:33738"/>
        <dbReference type="ChEBI" id="CHEBI:76801"/>
        <dbReference type="ChEBI" id="CHEBI:77350"/>
        <dbReference type="EC" id="1.14.15.33"/>
    </reaction>
</comment>
<comment type="catalytic activity">
    <reaction evidence="2 3 4 5 7 8">
        <text>narbomycin + 4 reduced [2Fe-2S]-[ferredoxin] + 2 O2 + 4 H(+) = novapikromycin + 4 oxidized [2Fe-2S]-[ferredoxin] + 2 H2O</text>
        <dbReference type="Rhea" id="RHEA:40535"/>
        <dbReference type="Rhea" id="RHEA-COMP:10000"/>
        <dbReference type="Rhea" id="RHEA-COMP:10001"/>
        <dbReference type="ChEBI" id="CHEBI:15377"/>
        <dbReference type="ChEBI" id="CHEBI:15378"/>
        <dbReference type="ChEBI" id="CHEBI:15379"/>
        <dbReference type="ChEBI" id="CHEBI:33737"/>
        <dbReference type="ChEBI" id="CHEBI:33738"/>
        <dbReference type="ChEBI" id="CHEBI:76801"/>
        <dbReference type="ChEBI" id="CHEBI:77351"/>
        <dbReference type="EC" id="1.14.15.33"/>
    </reaction>
</comment>
<comment type="catalytic activity">
    <reaction evidence="2 3 4 5 7 8">
        <text>10-deoxymethymycin + 2 reduced [2Fe-2S]-[ferredoxin] + O2 + 2 H(+) = methymycin + 2 oxidized [2Fe-2S]-[ferredoxin] + H2O</text>
        <dbReference type="Rhea" id="RHEA:40539"/>
        <dbReference type="Rhea" id="RHEA-COMP:10000"/>
        <dbReference type="Rhea" id="RHEA-COMP:10001"/>
        <dbReference type="ChEBI" id="CHEBI:15377"/>
        <dbReference type="ChEBI" id="CHEBI:15378"/>
        <dbReference type="ChEBI" id="CHEBI:15379"/>
        <dbReference type="ChEBI" id="CHEBI:33737"/>
        <dbReference type="ChEBI" id="CHEBI:33738"/>
        <dbReference type="ChEBI" id="CHEBI:63307"/>
        <dbReference type="ChEBI" id="CHEBI:77352"/>
        <dbReference type="EC" id="1.14.15.33"/>
    </reaction>
</comment>
<comment type="catalytic activity">
    <reaction evidence="2 3 4 5 7 8">
        <text>10-deoxymethymycin + 2 reduced [2Fe-2S]-[ferredoxin] + O2 + 2 H(+) = neomethymycin + 2 oxidized [2Fe-2S]-[ferredoxin] + H2O</text>
        <dbReference type="Rhea" id="RHEA:40543"/>
        <dbReference type="Rhea" id="RHEA-COMP:10000"/>
        <dbReference type="Rhea" id="RHEA-COMP:10001"/>
        <dbReference type="ChEBI" id="CHEBI:15377"/>
        <dbReference type="ChEBI" id="CHEBI:15378"/>
        <dbReference type="ChEBI" id="CHEBI:15379"/>
        <dbReference type="ChEBI" id="CHEBI:33737"/>
        <dbReference type="ChEBI" id="CHEBI:33738"/>
        <dbReference type="ChEBI" id="CHEBI:63307"/>
        <dbReference type="ChEBI" id="CHEBI:77353"/>
        <dbReference type="EC" id="1.14.15.33"/>
    </reaction>
</comment>
<comment type="catalytic activity">
    <reaction evidence="2 3 4 5 7 8">
        <text>10-deoxymethymycin + 4 reduced [2Fe-2S]-[ferredoxin] + 2 O2 + 4 H(+) = novamethymycin + 4 oxidized [2Fe-2S]-[ferredoxin] + 2 H2O</text>
        <dbReference type="Rhea" id="RHEA:40547"/>
        <dbReference type="Rhea" id="RHEA-COMP:10000"/>
        <dbReference type="Rhea" id="RHEA-COMP:10001"/>
        <dbReference type="ChEBI" id="CHEBI:15377"/>
        <dbReference type="ChEBI" id="CHEBI:15378"/>
        <dbReference type="ChEBI" id="CHEBI:15379"/>
        <dbReference type="ChEBI" id="CHEBI:33737"/>
        <dbReference type="ChEBI" id="CHEBI:33738"/>
        <dbReference type="ChEBI" id="CHEBI:63307"/>
        <dbReference type="ChEBI" id="CHEBI:77354"/>
        <dbReference type="EC" id="1.14.15.33"/>
    </reaction>
</comment>
<comment type="cofactor">
    <cofactor evidence="2 3 4 5 7 8">
        <name>heme</name>
        <dbReference type="ChEBI" id="CHEBI:30413"/>
    </cofactor>
</comment>
<comment type="biophysicochemical properties">
    <kinetics>
        <KM evidence="7">120 uM for narbomycin</KM>
        <KM evidence="8">20.4 uM for 10-deoxymethymycin</KM>
        <KM evidence="8">44 uM for narbomycin</KM>
    </kinetics>
</comment>
<comment type="pathway">
    <text evidence="2 3 4 5 6 7 8">Antibiotic biosynthesis.</text>
</comment>
<comment type="disruption phenotype">
    <text evidence="6 8">Abolishes the production of methymycin, neomethymycin and pikromycin and leads to the accumulation of their precursors.</text>
</comment>
<comment type="similarity">
    <text evidence="1 10 11 12">Belongs to the cytochrome P450 family.</text>
</comment>
<evidence type="ECO:0000255" key="1">
    <source>
        <dbReference type="RuleBase" id="RU000461"/>
    </source>
</evidence>
<evidence type="ECO:0000269" key="2">
    <source>
    </source>
</evidence>
<evidence type="ECO:0000269" key="3">
    <source>
    </source>
</evidence>
<evidence type="ECO:0000269" key="4">
    <source>
    </source>
</evidence>
<evidence type="ECO:0000269" key="5">
    <source>
    </source>
</evidence>
<evidence type="ECO:0000269" key="6">
    <source>
    </source>
</evidence>
<evidence type="ECO:0000269" key="7">
    <source>
    </source>
</evidence>
<evidence type="ECO:0000269" key="8">
    <source>
    </source>
</evidence>
<evidence type="ECO:0000303" key="9">
    <source>
    </source>
</evidence>
<evidence type="ECO:0000303" key="10">
    <source>
    </source>
</evidence>
<evidence type="ECO:0000303" key="11">
    <source>
    </source>
</evidence>
<evidence type="ECO:0000305" key="12"/>
<evidence type="ECO:0000312" key="13">
    <source>
        <dbReference type="EMBL" id="AAC64105.1"/>
    </source>
</evidence>
<evidence type="ECO:0000312" key="14">
    <source>
        <dbReference type="EMBL" id="AAC68886.1"/>
    </source>
</evidence>
<evidence type="ECO:0000312" key="15">
    <source>
        <dbReference type="PDB" id="2C6H"/>
    </source>
</evidence>
<evidence type="ECO:0000312" key="16">
    <source>
        <dbReference type="PDB" id="2C7X"/>
    </source>
</evidence>
<evidence type="ECO:0000312" key="17">
    <source>
        <dbReference type="PDB" id="2CA0"/>
    </source>
</evidence>
<evidence type="ECO:0000312" key="18">
    <source>
        <dbReference type="PDB" id="2CD8"/>
    </source>
</evidence>
<evidence type="ECO:0000312" key="19">
    <source>
        <dbReference type="PDB" id="2VZ7"/>
    </source>
</evidence>
<evidence type="ECO:0000312" key="20">
    <source>
        <dbReference type="PDB" id="2VZM"/>
    </source>
</evidence>
<evidence type="ECO:0000312" key="21">
    <source>
        <dbReference type="PDB" id="2WHW"/>
    </source>
</evidence>
<evidence type="ECO:0000312" key="22">
    <source>
        <dbReference type="PDB" id="2WI9"/>
    </source>
</evidence>
<evidence type="ECO:0000312" key="23">
    <source>
        <dbReference type="PDB" id="3ZK5"/>
    </source>
</evidence>
<evidence type="ECO:0000312" key="24">
    <source>
        <dbReference type="PDB" id="4B7D"/>
    </source>
</evidence>
<evidence type="ECO:0000312" key="25">
    <source>
        <dbReference type="PDB" id="4B7S"/>
    </source>
</evidence>
<evidence type="ECO:0000312" key="26">
    <source>
        <dbReference type="PDB" id="4BF4"/>
    </source>
</evidence>
<evidence type="ECO:0007829" key="27">
    <source>
        <dbReference type="PDB" id="2C7X"/>
    </source>
</evidence>
<evidence type="ECO:0007829" key="28">
    <source>
        <dbReference type="PDB" id="2CA0"/>
    </source>
</evidence>
<evidence type="ECO:0007829" key="29">
    <source>
        <dbReference type="PDB" id="2VZ7"/>
    </source>
</evidence>
<evidence type="ECO:0007829" key="30">
    <source>
        <dbReference type="PDB" id="3ZPI"/>
    </source>
</evidence>
<organism evidence="13">
    <name type="scientific">Streptomyces venezuelae</name>
    <dbReference type="NCBI Taxonomy" id="54571"/>
    <lineage>
        <taxon>Bacteria</taxon>
        <taxon>Bacillati</taxon>
        <taxon>Actinomycetota</taxon>
        <taxon>Actinomycetes</taxon>
        <taxon>Kitasatosporales</taxon>
        <taxon>Streptomycetaceae</taxon>
        <taxon>Streptomyces</taxon>
    </lineage>
</organism>
<sequence>MRRTQQGTTASPPVLDLGALGQDFAADPYPTYARLRAEGPAHRVRTPEGDEVWLVVGYDRARAVLADPRFSKDWRNSTTPLTEAEAALNHNMLESDPPRHTRLRKLVAREFTMRRVELLRPRVQEIVDGLVDAMLAAPDGRADLMESLAWPLPITVISELLGVPEPDRAAFRVWTDAFVFPDDPAQAQTAMAEMSGYLSRLIDSKRGQDGEDLLSALVRTSDEDGSRLTSEELLGMAHILLVAGHETTVNLIANGMYALLSHPDQLAALRADMTLLDGAVEEMLRYEGPVESATYRFPVEPVDLDGTVIPAGDTVLVVLADAHRTPERFPDPHRFDIRRDTAGHLAFGHGIHFCIGAPLARLEARIAVRALLERCPDLALDVSPGELVWYPNPMIRGLKALPIRWRRGREAGRRTG</sequence>